<evidence type="ECO:0000255" key="1">
    <source>
        <dbReference type="HAMAP-Rule" id="MF_00011"/>
    </source>
</evidence>
<protein>
    <recommendedName>
        <fullName evidence="1">Adenylosuccinate synthetase</fullName>
        <shortName evidence="1">AMPSase</shortName>
        <shortName evidence="1">AdSS</shortName>
        <ecNumber evidence="1">6.3.4.4</ecNumber>
    </recommendedName>
    <alternativeName>
        <fullName evidence="1">IMP--aspartate ligase</fullName>
    </alternativeName>
</protein>
<sequence>MTSVVVVGTQWGDEGKGKITDFLSANAEVIARYQGGDNAGHTIVIDGKKYKLHLIPSGIFFPEKISVIGNGMVVNPKSLVKELNYLHEEGVTTDNLRISDRAHVILPYHIELDRLQEEAKGDNKIGTTIKGIGPAYMDKAARVGIRIADLLDRDIFRERLERNLAEKNRLFEKLYDSTAIKIDDIFEEYYEYGQQIKQYVTDTSVILNNALDQGKRVLFEGAQGVMLDIDQGTYPFVTSSNPVAGGVTIGSGVGPSKIDKVVGVCKAYTSRVGDGPFPTELFDEVGDRIREVGHEYGTTTGRPRRVGWFDSVVMRHSRRVSGITNLSLNSIDVLSGLDTVKICVAYDLDGQRIDHYPASLEQLKRCKPIYEELPGWSEDITGVRKLEDLPENARNYVRRVSELVGVRISTFSVGPDRDQTNILESVWSSL</sequence>
<comment type="function">
    <text evidence="1">Plays an important role in the de novo pathway of purine nucleotide biosynthesis. Catalyzes the first committed step in the biosynthesis of AMP from IMP.</text>
</comment>
<comment type="catalytic activity">
    <reaction evidence="1">
        <text>IMP + L-aspartate + GTP = N(6)-(1,2-dicarboxyethyl)-AMP + GDP + phosphate + 2 H(+)</text>
        <dbReference type="Rhea" id="RHEA:15753"/>
        <dbReference type="ChEBI" id="CHEBI:15378"/>
        <dbReference type="ChEBI" id="CHEBI:29991"/>
        <dbReference type="ChEBI" id="CHEBI:37565"/>
        <dbReference type="ChEBI" id="CHEBI:43474"/>
        <dbReference type="ChEBI" id="CHEBI:57567"/>
        <dbReference type="ChEBI" id="CHEBI:58053"/>
        <dbReference type="ChEBI" id="CHEBI:58189"/>
        <dbReference type="EC" id="6.3.4.4"/>
    </reaction>
</comment>
<comment type="cofactor">
    <cofactor evidence="1">
        <name>Mg(2+)</name>
        <dbReference type="ChEBI" id="CHEBI:18420"/>
    </cofactor>
    <text evidence="1">Binds 1 Mg(2+) ion per subunit.</text>
</comment>
<comment type="pathway">
    <text evidence="1">Purine metabolism; AMP biosynthesis via de novo pathway; AMP from IMP: step 1/2.</text>
</comment>
<comment type="subunit">
    <text evidence="1">Homodimer.</text>
</comment>
<comment type="subcellular location">
    <subcellularLocation>
        <location evidence="1">Cytoplasm</location>
    </subcellularLocation>
</comment>
<comment type="similarity">
    <text evidence="1">Belongs to the adenylosuccinate synthetase family.</text>
</comment>
<dbReference type="EC" id="6.3.4.4" evidence="1"/>
<dbReference type="EMBL" id="CP000725">
    <property type="protein sequence ID" value="ABV09889.1"/>
    <property type="molecule type" value="Genomic_DNA"/>
</dbReference>
<dbReference type="RefSeq" id="WP_012130967.1">
    <property type="nucleotide sequence ID" value="NC_009785.1"/>
</dbReference>
<dbReference type="SMR" id="A8AZM9"/>
<dbReference type="STRING" id="467705.SGO_1989"/>
<dbReference type="KEGG" id="sgo:SGO_1989"/>
<dbReference type="eggNOG" id="COG0104">
    <property type="taxonomic scope" value="Bacteria"/>
</dbReference>
<dbReference type="HOGENOM" id="CLU_029848_0_0_9"/>
<dbReference type="UniPathway" id="UPA00075">
    <property type="reaction ID" value="UER00335"/>
</dbReference>
<dbReference type="Proteomes" id="UP000001131">
    <property type="component" value="Chromosome"/>
</dbReference>
<dbReference type="GO" id="GO:0005737">
    <property type="term" value="C:cytoplasm"/>
    <property type="evidence" value="ECO:0007669"/>
    <property type="project" value="UniProtKB-SubCell"/>
</dbReference>
<dbReference type="GO" id="GO:0004019">
    <property type="term" value="F:adenylosuccinate synthase activity"/>
    <property type="evidence" value="ECO:0007669"/>
    <property type="project" value="UniProtKB-UniRule"/>
</dbReference>
<dbReference type="GO" id="GO:0005525">
    <property type="term" value="F:GTP binding"/>
    <property type="evidence" value="ECO:0007669"/>
    <property type="project" value="UniProtKB-UniRule"/>
</dbReference>
<dbReference type="GO" id="GO:0000287">
    <property type="term" value="F:magnesium ion binding"/>
    <property type="evidence" value="ECO:0007669"/>
    <property type="project" value="UniProtKB-UniRule"/>
</dbReference>
<dbReference type="GO" id="GO:0044208">
    <property type="term" value="P:'de novo' AMP biosynthetic process"/>
    <property type="evidence" value="ECO:0007669"/>
    <property type="project" value="UniProtKB-UniRule"/>
</dbReference>
<dbReference type="GO" id="GO:0046040">
    <property type="term" value="P:IMP metabolic process"/>
    <property type="evidence" value="ECO:0007669"/>
    <property type="project" value="TreeGrafter"/>
</dbReference>
<dbReference type="CDD" id="cd03108">
    <property type="entry name" value="AdSS"/>
    <property type="match status" value="1"/>
</dbReference>
<dbReference type="FunFam" id="1.10.300.10:FF:000001">
    <property type="entry name" value="Adenylosuccinate synthetase"/>
    <property type="match status" value="1"/>
</dbReference>
<dbReference type="FunFam" id="3.90.170.10:FF:000001">
    <property type="entry name" value="Adenylosuccinate synthetase"/>
    <property type="match status" value="1"/>
</dbReference>
<dbReference type="Gene3D" id="3.40.440.10">
    <property type="entry name" value="Adenylosuccinate Synthetase, subunit A, domain 1"/>
    <property type="match status" value="1"/>
</dbReference>
<dbReference type="Gene3D" id="1.10.300.10">
    <property type="entry name" value="Adenylosuccinate Synthetase, subunit A, domain 2"/>
    <property type="match status" value="1"/>
</dbReference>
<dbReference type="Gene3D" id="3.90.170.10">
    <property type="entry name" value="Adenylosuccinate Synthetase, subunit A, domain 3"/>
    <property type="match status" value="1"/>
</dbReference>
<dbReference type="HAMAP" id="MF_00011">
    <property type="entry name" value="Adenylosucc_synth"/>
    <property type="match status" value="1"/>
</dbReference>
<dbReference type="InterPro" id="IPR018220">
    <property type="entry name" value="Adenylosuccin_syn_GTP-bd"/>
</dbReference>
<dbReference type="InterPro" id="IPR033128">
    <property type="entry name" value="Adenylosuccin_syn_Lys_AS"/>
</dbReference>
<dbReference type="InterPro" id="IPR042109">
    <property type="entry name" value="Adenylosuccinate_synth_dom1"/>
</dbReference>
<dbReference type="InterPro" id="IPR042110">
    <property type="entry name" value="Adenylosuccinate_synth_dom2"/>
</dbReference>
<dbReference type="InterPro" id="IPR042111">
    <property type="entry name" value="Adenylosuccinate_synth_dom3"/>
</dbReference>
<dbReference type="InterPro" id="IPR001114">
    <property type="entry name" value="Adenylosuccinate_synthetase"/>
</dbReference>
<dbReference type="InterPro" id="IPR027417">
    <property type="entry name" value="P-loop_NTPase"/>
</dbReference>
<dbReference type="NCBIfam" id="NF002223">
    <property type="entry name" value="PRK01117.1"/>
    <property type="match status" value="1"/>
</dbReference>
<dbReference type="NCBIfam" id="TIGR00184">
    <property type="entry name" value="purA"/>
    <property type="match status" value="1"/>
</dbReference>
<dbReference type="PANTHER" id="PTHR11846">
    <property type="entry name" value="ADENYLOSUCCINATE SYNTHETASE"/>
    <property type="match status" value="1"/>
</dbReference>
<dbReference type="PANTHER" id="PTHR11846:SF0">
    <property type="entry name" value="ADENYLOSUCCINATE SYNTHETASE"/>
    <property type="match status" value="1"/>
</dbReference>
<dbReference type="Pfam" id="PF00709">
    <property type="entry name" value="Adenylsucc_synt"/>
    <property type="match status" value="1"/>
</dbReference>
<dbReference type="SMART" id="SM00788">
    <property type="entry name" value="Adenylsucc_synt"/>
    <property type="match status" value="1"/>
</dbReference>
<dbReference type="SUPFAM" id="SSF52540">
    <property type="entry name" value="P-loop containing nucleoside triphosphate hydrolases"/>
    <property type="match status" value="1"/>
</dbReference>
<dbReference type="PROSITE" id="PS01266">
    <property type="entry name" value="ADENYLOSUCCIN_SYN_1"/>
    <property type="match status" value="1"/>
</dbReference>
<dbReference type="PROSITE" id="PS00513">
    <property type="entry name" value="ADENYLOSUCCIN_SYN_2"/>
    <property type="match status" value="1"/>
</dbReference>
<name>PURA_STRGC</name>
<keyword id="KW-0963">Cytoplasm</keyword>
<keyword id="KW-0342">GTP-binding</keyword>
<keyword id="KW-0436">Ligase</keyword>
<keyword id="KW-0460">Magnesium</keyword>
<keyword id="KW-0479">Metal-binding</keyword>
<keyword id="KW-0547">Nucleotide-binding</keyword>
<keyword id="KW-0658">Purine biosynthesis</keyword>
<keyword id="KW-1185">Reference proteome</keyword>
<organism>
    <name type="scientific">Streptococcus gordonii (strain Challis / ATCC 35105 / BCRC 15272 / CH1 / DL1 / V288)</name>
    <dbReference type="NCBI Taxonomy" id="467705"/>
    <lineage>
        <taxon>Bacteria</taxon>
        <taxon>Bacillati</taxon>
        <taxon>Bacillota</taxon>
        <taxon>Bacilli</taxon>
        <taxon>Lactobacillales</taxon>
        <taxon>Streptococcaceae</taxon>
        <taxon>Streptococcus</taxon>
    </lineage>
</organism>
<gene>
    <name evidence="1" type="primary">purA</name>
    <name type="ordered locus">SGO_1989</name>
</gene>
<proteinExistence type="inferred from homology"/>
<reference key="1">
    <citation type="journal article" date="2007" name="J. Bacteriol.">
        <title>Genome-wide transcriptional changes in Streptococcus gordonii in response to competence signaling peptide.</title>
        <authorList>
            <person name="Vickerman M.M."/>
            <person name="Iobst S."/>
            <person name="Jesionowski A.M."/>
            <person name="Gill S.R."/>
        </authorList>
    </citation>
    <scope>NUCLEOTIDE SEQUENCE [LARGE SCALE GENOMIC DNA]</scope>
    <source>
        <strain>Challis / ATCC 35105 / BCRC 15272 / CH1 / DL1 / V288</strain>
    </source>
</reference>
<accession>A8AZM9</accession>
<feature type="chain" id="PRO_1000073963" description="Adenylosuccinate synthetase">
    <location>
        <begin position="1"/>
        <end position="430"/>
    </location>
</feature>
<feature type="active site" description="Proton acceptor" evidence="1">
    <location>
        <position position="13"/>
    </location>
</feature>
<feature type="active site" description="Proton donor" evidence="1">
    <location>
        <position position="41"/>
    </location>
</feature>
<feature type="binding site" evidence="1">
    <location>
        <begin position="12"/>
        <end position="18"/>
    </location>
    <ligand>
        <name>GTP</name>
        <dbReference type="ChEBI" id="CHEBI:37565"/>
    </ligand>
</feature>
<feature type="binding site" description="in other chain" evidence="1">
    <location>
        <begin position="13"/>
        <end position="16"/>
    </location>
    <ligand>
        <name>IMP</name>
        <dbReference type="ChEBI" id="CHEBI:58053"/>
        <note>ligand shared between dimeric partners</note>
    </ligand>
</feature>
<feature type="binding site" evidence="1">
    <location>
        <position position="13"/>
    </location>
    <ligand>
        <name>Mg(2+)</name>
        <dbReference type="ChEBI" id="CHEBI:18420"/>
    </ligand>
</feature>
<feature type="binding site" description="in other chain" evidence="1">
    <location>
        <begin position="38"/>
        <end position="41"/>
    </location>
    <ligand>
        <name>IMP</name>
        <dbReference type="ChEBI" id="CHEBI:58053"/>
        <note>ligand shared between dimeric partners</note>
    </ligand>
</feature>
<feature type="binding site" evidence="1">
    <location>
        <begin position="40"/>
        <end position="42"/>
    </location>
    <ligand>
        <name>GTP</name>
        <dbReference type="ChEBI" id="CHEBI:37565"/>
    </ligand>
</feature>
<feature type="binding site" evidence="1">
    <location>
        <position position="40"/>
    </location>
    <ligand>
        <name>Mg(2+)</name>
        <dbReference type="ChEBI" id="CHEBI:18420"/>
    </ligand>
</feature>
<feature type="binding site" description="in other chain" evidence="1">
    <location>
        <position position="128"/>
    </location>
    <ligand>
        <name>IMP</name>
        <dbReference type="ChEBI" id="CHEBI:58053"/>
        <note>ligand shared between dimeric partners</note>
    </ligand>
</feature>
<feature type="binding site" evidence="1">
    <location>
        <position position="142"/>
    </location>
    <ligand>
        <name>IMP</name>
        <dbReference type="ChEBI" id="CHEBI:58053"/>
        <note>ligand shared between dimeric partners</note>
    </ligand>
</feature>
<feature type="binding site" description="in other chain" evidence="1">
    <location>
        <position position="223"/>
    </location>
    <ligand>
        <name>IMP</name>
        <dbReference type="ChEBI" id="CHEBI:58053"/>
        <note>ligand shared between dimeric partners</note>
    </ligand>
</feature>
<feature type="binding site" description="in other chain" evidence="1">
    <location>
        <position position="238"/>
    </location>
    <ligand>
        <name>IMP</name>
        <dbReference type="ChEBI" id="CHEBI:58053"/>
        <note>ligand shared between dimeric partners</note>
    </ligand>
</feature>
<feature type="binding site" evidence="1">
    <location>
        <begin position="298"/>
        <end position="304"/>
    </location>
    <ligand>
        <name>substrate</name>
    </ligand>
</feature>
<feature type="binding site" description="in other chain" evidence="1">
    <location>
        <position position="302"/>
    </location>
    <ligand>
        <name>IMP</name>
        <dbReference type="ChEBI" id="CHEBI:58053"/>
        <note>ligand shared between dimeric partners</note>
    </ligand>
</feature>
<feature type="binding site" evidence="1">
    <location>
        <position position="304"/>
    </location>
    <ligand>
        <name>GTP</name>
        <dbReference type="ChEBI" id="CHEBI:37565"/>
    </ligand>
</feature>
<feature type="binding site" evidence="1">
    <location>
        <begin position="330"/>
        <end position="332"/>
    </location>
    <ligand>
        <name>GTP</name>
        <dbReference type="ChEBI" id="CHEBI:37565"/>
    </ligand>
</feature>
<feature type="binding site" evidence="1">
    <location>
        <begin position="412"/>
        <end position="414"/>
    </location>
    <ligand>
        <name>GTP</name>
        <dbReference type="ChEBI" id="CHEBI:37565"/>
    </ligand>
</feature>